<reference key="1">
    <citation type="journal article" date="1993" name="Mol. Biol. Evol.">
        <title>Conservation of alternative splicing and genomic organization of the myosin alkali light-chain (Mlc1) gene among Drosophila species.</title>
        <authorList>
            <person name="Leicht B.G."/>
            <person name="Lyckegaard E.M.S."/>
            <person name="Benedict C.M."/>
            <person name="Clark A.G."/>
        </authorList>
    </citation>
    <scope>NUCLEOTIDE SEQUENCE [GENOMIC DNA]</scope>
    <scope>ALTERNATIVE SPLICING</scope>
    <source>
        <tissue>Flight muscle</tissue>
        <tissue>Head</tissue>
        <tissue>Larva</tissue>
    </source>
</reference>
<reference key="2">
    <citation type="journal article" date="2007" name="Nature">
        <title>Evolution of genes and genomes on the Drosophila phylogeny.</title>
        <authorList>
            <consortium name="Drosophila 12 genomes consortium"/>
        </authorList>
    </citation>
    <scope>NUCLEOTIDE SEQUENCE [LARGE SCALE GENOMIC DNA]</scope>
</reference>
<reference key="3">
    <citation type="journal article" date="1996" name="Mol. Biol. Evol.">
        <title>Length variation and secondary structure of introns in the Mlc1 gene in six species of Drosophila.</title>
        <authorList>
            <person name="Clark A.G."/>
            <person name="Leicht B.G."/>
            <person name="Muse S.V."/>
        </authorList>
    </citation>
    <scope>NUCLEOTIDE SEQUENCE [GENOMIC DNA] OF 67-155</scope>
    <source>
        <strain>3a</strain>
        <strain>4a</strain>
        <strain>5a</strain>
        <strain>6</strain>
        <strain>6a</strain>
        <strain>7</strain>
        <strain>7'</strain>
        <strain>9</strain>
    </source>
</reference>
<protein>
    <recommendedName>
        <fullName>Myosin light chain alkali</fullName>
    </recommendedName>
</protein>
<dbReference type="EMBL" id="L08051">
    <property type="protein sequence ID" value="AAA28689.1"/>
    <property type="molecule type" value="Genomic_DNA"/>
</dbReference>
<dbReference type="EMBL" id="L08051">
    <property type="protein sequence ID" value="AAA28688.1"/>
    <property type="molecule type" value="Genomic_DNA"/>
</dbReference>
<dbReference type="EMBL" id="CM000364">
    <property type="protein sequence ID" value="EDX14674.1"/>
    <property type="molecule type" value="Genomic_DNA"/>
</dbReference>
<dbReference type="EMBL" id="L49010">
    <property type="protein sequence ID" value="AAC37276.1"/>
    <property type="molecule type" value="Genomic_DNA"/>
</dbReference>
<dbReference type="EMBL" id="L49010">
    <property type="protein sequence ID" value="AAC37277.1"/>
    <property type="molecule type" value="Genomic_DNA"/>
</dbReference>
<dbReference type="EMBL" id="L49011">
    <property type="protein sequence ID" value="AAC37278.1"/>
    <property type="molecule type" value="Genomic_DNA"/>
</dbReference>
<dbReference type="EMBL" id="L49011">
    <property type="protein sequence ID" value="AAC37279.1"/>
    <property type="molecule type" value="Genomic_DNA"/>
</dbReference>
<dbReference type="EMBL" id="L49012">
    <property type="protein sequence ID" value="AAC37280.1"/>
    <property type="molecule type" value="Genomic_DNA"/>
</dbReference>
<dbReference type="EMBL" id="L49012">
    <property type="protein sequence ID" value="AAC37281.1"/>
    <property type="molecule type" value="Genomic_DNA"/>
</dbReference>
<dbReference type="EMBL" id="L49013">
    <property type="protein sequence ID" value="AAC37282.1"/>
    <property type="molecule type" value="Genomic_DNA"/>
</dbReference>
<dbReference type="EMBL" id="L49013">
    <property type="protein sequence ID" value="AAC37283.1"/>
    <property type="molecule type" value="Genomic_DNA"/>
</dbReference>
<dbReference type="EMBL" id="L49014">
    <property type="protein sequence ID" value="AAC37284.1"/>
    <property type="molecule type" value="Genomic_DNA"/>
</dbReference>
<dbReference type="EMBL" id="L49014">
    <property type="protein sequence ID" value="AAC37285.1"/>
    <property type="molecule type" value="Genomic_DNA"/>
</dbReference>
<dbReference type="EMBL" id="L49015">
    <property type="protein sequence ID" value="AAC37286.1"/>
    <property type="molecule type" value="Genomic_DNA"/>
</dbReference>
<dbReference type="EMBL" id="L49016">
    <property type="protein sequence ID" value="AAC37287.1"/>
    <property type="molecule type" value="Genomic_DNA"/>
</dbReference>
<dbReference type="EMBL" id="L49016">
    <property type="protein sequence ID" value="AAC37288.1"/>
    <property type="molecule type" value="Genomic_DNA"/>
</dbReference>
<dbReference type="EMBL" id="L49017">
    <property type="protein sequence ID" value="AAC37290.1"/>
    <property type="molecule type" value="Genomic_DNA"/>
</dbReference>
<dbReference type="RefSeq" id="XP_016036617.1">
    <molecule id="Q24654-1"/>
    <property type="nucleotide sequence ID" value="XM_016174552.1"/>
</dbReference>
<dbReference type="RefSeq" id="XP_016036618.1">
    <molecule id="Q24654-2"/>
    <property type="nucleotide sequence ID" value="XM_016174553.1"/>
</dbReference>
<dbReference type="SMR" id="Q24654"/>
<dbReference type="STRING" id="7240.Q24654"/>
<dbReference type="EnsemblMetazoa" id="FBtr0217976">
    <molecule id="Q24654-1"/>
    <property type="protein sequence ID" value="FBpp0216468"/>
    <property type="gene ID" value="FBgn0012844"/>
</dbReference>
<dbReference type="EnsemblMetazoa" id="FBtr0348085">
    <molecule id="Q24654-2"/>
    <property type="protein sequence ID" value="FBpp0313054"/>
    <property type="gene ID" value="FBgn0012844"/>
</dbReference>
<dbReference type="EnsemblMetazoa" id="XM_016174552.3">
    <molecule id="Q24654-1"/>
    <property type="protein sequence ID" value="XP_016036617.1"/>
    <property type="gene ID" value="LOC6729868"/>
</dbReference>
<dbReference type="EnsemblMetazoa" id="XM_016174553.3">
    <molecule id="Q24654-2"/>
    <property type="protein sequence ID" value="XP_016036618.1"/>
    <property type="gene ID" value="LOC6729868"/>
</dbReference>
<dbReference type="GeneID" id="6729868"/>
<dbReference type="CTD" id="23209"/>
<dbReference type="HOGENOM" id="CLU_061288_13_3_1"/>
<dbReference type="OMA" id="EEWMPIY"/>
<dbReference type="OrthoDB" id="26525at2759"/>
<dbReference type="PhylomeDB" id="Q24654"/>
<dbReference type="ChiTaRS" id="Mlc1">
    <property type="organism name" value="fly"/>
</dbReference>
<dbReference type="Proteomes" id="UP000000304">
    <property type="component" value="Chromosome 3R"/>
</dbReference>
<dbReference type="Bgee" id="FBgn0012844">
    <property type="expression patterns" value="Expressed in adult organism and 3 other cell types or tissues"/>
</dbReference>
<dbReference type="GO" id="GO:0005859">
    <property type="term" value="C:muscle myosin complex"/>
    <property type="evidence" value="ECO:0000250"/>
    <property type="project" value="UniProtKB"/>
</dbReference>
<dbReference type="GO" id="GO:0005509">
    <property type="term" value="F:calcium ion binding"/>
    <property type="evidence" value="ECO:0007669"/>
    <property type="project" value="InterPro"/>
</dbReference>
<dbReference type="GO" id="GO:0007498">
    <property type="term" value="P:mesoderm development"/>
    <property type="evidence" value="ECO:0007669"/>
    <property type="project" value="EnsemblMetazoa"/>
</dbReference>
<dbReference type="FunFam" id="1.10.238.10:FF:000286">
    <property type="entry name" value="Myosin alkali light chain 1"/>
    <property type="match status" value="1"/>
</dbReference>
<dbReference type="FunFam" id="1.10.238.10:FF:000267">
    <property type="entry name" value="Myosin light chain alkali"/>
    <property type="match status" value="1"/>
</dbReference>
<dbReference type="Gene3D" id="1.10.238.10">
    <property type="entry name" value="EF-hand"/>
    <property type="match status" value="2"/>
</dbReference>
<dbReference type="InterPro" id="IPR050230">
    <property type="entry name" value="CALM/Myosin/TropC-like"/>
</dbReference>
<dbReference type="InterPro" id="IPR011992">
    <property type="entry name" value="EF-hand-dom_pair"/>
</dbReference>
<dbReference type="InterPro" id="IPR002048">
    <property type="entry name" value="EF_hand_dom"/>
</dbReference>
<dbReference type="PANTHER" id="PTHR23048">
    <property type="entry name" value="MYOSIN LIGHT CHAIN 1, 3"/>
    <property type="match status" value="1"/>
</dbReference>
<dbReference type="PANTHER" id="PTHR23048:SF33">
    <property type="entry name" value="MYOSIN LIGHT CHAIN ALKALI"/>
    <property type="match status" value="1"/>
</dbReference>
<dbReference type="SUPFAM" id="SSF47473">
    <property type="entry name" value="EF-hand"/>
    <property type="match status" value="1"/>
</dbReference>
<dbReference type="PROSITE" id="PS50222">
    <property type="entry name" value="EF_HAND_2"/>
    <property type="match status" value="2"/>
</dbReference>
<name>MLC1_DROSI</name>
<comment type="subunit">
    <text>Myosin is a hexamer of 2 heavy chains and 4 light chains.</text>
</comment>
<comment type="alternative products">
    <event type="alternative splicing"/>
    <isoform>
        <id>Q24654-1</id>
        <name>Larval-adult</name>
        <name>Larval-non-IFM</name>
        <sequence type="displayed"/>
    </isoform>
    <isoform>
        <id>Q24654-2</id>
        <name>Indirect flight muscle</name>
        <name>Pupa</name>
        <name>Adult flight muscle</name>
        <sequence type="described" ref="VSP_003370"/>
    </isoform>
</comment>
<accession>Q24654</accession>
<accession>B4QY26</accession>
<accession>Q24653</accession>
<accession>Q24657</accession>
<accession>Q24659</accession>
<accession>Q27299</accession>
<accession>Q27429</accession>
<feature type="chain" id="PRO_0000198712" description="Myosin light chain alkali">
    <location>
        <begin position="1"/>
        <end position="155"/>
    </location>
</feature>
<feature type="domain" description="EF-hand 1" evidence="1">
    <location>
        <begin position="7"/>
        <end position="41"/>
    </location>
</feature>
<feature type="domain" description="EF-hand 2" evidence="1">
    <location>
        <begin position="80"/>
        <end position="115"/>
    </location>
</feature>
<feature type="splice variant" id="VSP_003370" description="In isoform Indirect flight muscle." evidence="2">
    <original>QFVQRLMSDPVVFD</original>
    <variation>PFLARMCDRPDQLK</variation>
    <location>
        <begin position="142"/>
        <end position="155"/>
    </location>
</feature>
<proteinExistence type="predicted"/>
<organism>
    <name type="scientific">Drosophila simulans</name>
    <name type="common">Fruit fly</name>
    <dbReference type="NCBI Taxonomy" id="7240"/>
    <lineage>
        <taxon>Eukaryota</taxon>
        <taxon>Metazoa</taxon>
        <taxon>Ecdysozoa</taxon>
        <taxon>Arthropoda</taxon>
        <taxon>Hexapoda</taxon>
        <taxon>Insecta</taxon>
        <taxon>Pterygota</taxon>
        <taxon>Neoptera</taxon>
        <taxon>Endopterygota</taxon>
        <taxon>Diptera</taxon>
        <taxon>Brachycera</taxon>
        <taxon>Muscomorpha</taxon>
        <taxon>Ephydroidea</taxon>
        <taxon>Drosophilidae</taxon>
        <taxon>Drosophila</taxon>
        <taxon>Sophophora</taxon>
    </lineage>
</organism>
<sequence>MADVPKREVENVEFVFEVMGSPGEGIDAVDLGDALRALNLNPTLALIEKLGGTKKRNEKKIKLDEFLPIYSQVKKEKEQGCYEDFIECLKLYDKEENGTMMLAELQHALLALGESLDDEQVETLFADCMDPEDDEGFIPYSQFVQRLMSDPVVFD</sequence>
<gene>
    <name type="primary">Mlc1</name>
    <name type="ORF">GD18066</name>
</gene>
<evidence type="ECO:0000255" key="1">
    <source>
        <dbReference type="PROSITE-ProRule" id="PRU00448"/>
    </source>
</evidence>
<evidence type="ECO:0000305" key="2"/>
<keyword id="KW-0025">Alternative splicing</keyword>
<keyword id="KW-0505">Motor protein</keyword>
<keyword id="KW-0514">Muscle protein</keyword>
<keyword id="KW-0518">Myosin</keyword>
<keyword id="KW-1185">Reference proteome</keyword>
<keyword id="KW-0677">Repeat</keyword>